<dbReference type="EC" id="2.7.7.6" evidence="1"/>
<dbReference type="EMBL" id="AB032408">
    <property type="protein sequence ID" value="BAA84525.1"/>
    <property type="molecule type" value="Genomic_DNA"/>
</dbReference>
<dbReference type="EMBL" id="AP011177">
    <property type="protein sequence ID" value="BAJ04108.1"/>
    <property type="molecule type" value="Genomic_DNA"/>
</dbReference>
<dbReference type="RefSeq" id="WP_013053398.1">
    <property type="nucleotide sequence ID" value="NC_014012.1"/>
</dbReference>
<dbReference type="SMR" id="Q9S0Q8"/>
<dbReference type="STRING" id="637905.SVI_4137"/>
<dbReference type="KEGG" id="svo:SVI_4137"/>
<dbReference type="eggNOG" id="COG0202">
    <property type="taxonomic scope" value="Bacteria"/>
</dbReference>
<dbReference type="HOGENOM" id="CLU_053084_0_0_6"/>
<dbReference type="OrthoDB" id="9805706at2"/>
<dbReference type="Proteomes" id="UP000002350">
    <property type="component" value="Chromosome"/>
</dbReference>
<dbReference type="GO" id="GO:0005737">
    <property type="term" value="C:cytoplasm"/>
    <property type="evidence" value="ECO:0007669"/>
    <property type="project" value="UniProtKB-ARBA"/>
</dbReference>
<dbReference type="GO" id="GO:0000428">
    <property type="term" value="C:DNA-directed RNA polymerase complex"/>
    <property type="evidence" value="ECO:0007669"/>
    <property type="project" value="UniProtKB-KW"/>
</dbReference>
<dbReference type="GO" id="GO:0003677">
    <property type="term" value="F:DNA binding"/>
    <property type="evidence" value="ECO:0007669"/>
    <property type="project" value="UniProtKB-UniRule"/>
</dbReference>
<dbReference type="GO" id="GO:0003899">
    <property type="term" value="F:DNA-directed RNA polymerase activity"/>
    <property type="evidence" value="ECO:0007669"/>
    <property type="project" value="UniProtKB-UniRule"/>
</dbReference>
<dbReference type="GO" id="GO:0046983">
    <property type="term" value="F:protein dimerization activity"/>
    <property type="evidence" value="ECO:0007669"/>
    <property type="project" value="InterPro"/>
</dbReference>
<dbReference type="GO" id="GO:0006351">
    <property type="term" value="P:DNA-templated transcription"/>
    <property type="evidence" value="ECO:0007669"/>
    <property type="project" value="UniProtKB-UniRule"/>
</dbReference>
<dbReference type="CDD" id="cd06928">
    <property type="entry name" value="RNAP_alpha_NTD"/>
    <property type="match status" value="1"/>
</dbReference>
<dbReference type="FunFam" id="1.10.150.20:FF:000001">
    <property type="entry name" value="DNA-directed RNA polymerase subunit alpha"/>
    <property type="match status" value="1"/>
</dbReference>
<dbReference type="FunFam" id="2.170.120.12:FF:000001">
    <property type="entry name" value="DNA-directed RNA polymerase subunit alpha"/>
    <property type="match status" value="1"/>
</dbReference>
<dbReference type="Gene3D" id="1.10.150.20">
    <property type="entry name" value="5' to 3' exonuclease, C-terminal subdomain"/>
    <property type="match status" value="1"/>
</dbReference>
<dbReference type="Gene3D" id="2.170.120.12">
    <property type="entry name" value="DNA-directed RNA polymerase, insert domain"/>
    <property type="match status" value="1"/>
</dbReference>
<dbReference type="Gene3D" id="3.30.1360.10">
    <property type="entry name" value="RNA polymerase, RBP11-like subunit"/>
    <property type="match status" value="1"/>
</dbReference>
<dbReference type="HAMAP" id="MF_00059">
    <property type="entry name" value="RNApol_bact_RpoA"/>
    <property type="match status" value="1"/>
</dbReference>
<dbReference type="InterPro" id="IPR011262">
    <property type="entry name" value="DNA-dir_RNA_pol_insert"/>
</dbReference>
<dbReference type="InterPro" id="IPR011263">
    <property type="entry name" value="DNA-dir_RNA_pol_RpoA/D/Rpb3"/>
</dbReference>
<dbReference type="InterPro" id="IPR011773">
    <property type="entry name" value="DNA-dir_RpoA"/>
</dbReference>
<dbReference type="InterPro" id="IPR036603">
    <property type="entry name" value="RBP11-like"/>
</dbReference>
<dbReference type="InterPro" id="IPR011260">
    <property type="entry name" value="RNAP_asu_C"/>
</dbReference>
<dbReference type="InterPro" id="IPR036643">
    <property type="entry name" value="RNApol_insert_sf"/>
</dbReference>
<dbReference type="NCBIfam" id="NF003513">
    <property type="entry name" value="PRK05182.1-2"/>
    <property type="match status" value="1"/>
</dbReference>
<dbReference type="NCBIfam" id="NF003519">
    <property type="entry name" value="PRK05182.2-5"/>
    <property type="match status" value="1"/>
</dbReference>
<dbReference type="NCBIfam" id="TIGR02027">
    <property type="entry name" value="rpoA"/>
    <property type="match status" value="1"/>
</dbReference>
<dbReference type="Pfam" id="PF01000">
    <property type="entry name" value="RNA_pol_A_bac"/>
    <property type="match status" value="1"/>
</dbReference>
<dbReference type="Pfam" id="PF03118">
    <property type="entry name" value="RNA_pol_A_CTD"/>
    <property type="match status" value="1"/>
</dbReference>
<dbReference type="Pfam" id="PF01193">
    <property type="entry name" value="RNA_pol_L"/>
    <property type="match status" value="1"/>
</dbReference>
<dbReference type="SMART" id="SM00662">
    <property type="entry name" value="RPOLD"/>
    <property type="match status" value="1"/>
</dbReference>
<dbReference type="SUPFAM" id="SSF47789">
    <property type="entry name" value="C-terminal domain of RNA polymerase alpha subunit"/>
    <property type="match status" value="1"/>
</dbReference>
<dbReference type="SUPFAM" id="SSF56553">
    <property type="entry name" value="Insert subdomain of RNA polymerase alpha subunit"/>
    <property type="match status" value="1"/>
</dbReference>
<dbReference type="SUPFAM" id="SSF55257">
    <property type="entry name" value="RBP11-like subunits of RNA polymerase"/>
    <property type="match status" value="1"/>
</dbReference>
<gene>
    <name evidence="1" type="primary">rpoA</name>
    <name type="ordered locus">SVI_4137</name>
</gene>
<sequence>MQGSVTEFLRPRLVDIEQVNPTRAKVTLEPLERGFGHTLGNALRRILLSSMPGCAVTEVEIDGVLHEYSSKEGVQEDILEILLNLKGLAVVIEGKDEAMLTLSKSGAGPVTAADITHDGDVTIMNPEHVVCHLTGNNEISMRIRVERGRGYVPASARAQTEDDDRPIGRLLVDASFSPVARIAYNVEAARVEQRTDLDKLVIDMTTNGTLDPEEAIRRAATILAEQLDAFVELRDVTEPEQKEEKPEFDPILLRPVDDLELTVRSANCLKAEAIHYIGDLVQRTEVELLKTPNLGKKSLTEIKDVLASRGLSLGMRLENWPPASLVDDL</sequence>
<accession>Q9S0Q8</accession>
<accession>D4ZE47</accession>
<organism>
    <name type="scientific">Shewanella violacea (strain JCM 10179 / CIP 106290 / LMG 19151 / DSS12)</name>
    <dbReference type="NCBI Taxonomy" id="637905"/>
    <lineage>
        <taxon>Bacteria</taxon>
        <taxon>Pseudomonadati</taxon>
        <taxon>Pseudomonadota</taxon>
        <taxon>Gammaproteobacteria</taxon>
        <taxon>Alteromonadales</taxon>
        <taxon>Shewanellaceae</taxon>
        <taxon>Shewanella</taxon>
    </lineage>
</organism>
<name>RPOA_SHEVD</name>
<proteinExistence type="inferred from homology"/>
<keyword id="KW-0240">DNA-directed RNA polymerase</keyword>
<keyword id="KW-0548">Nucleotidyltransferase</keyword>
<keyword id="KW-1185">Reference proteome</keyword>
<keyword id="KW-0804">Transcription</keyword>
<keyword id="KW-0808">Transferase</keyword>
<evidence type="ECO:0000255" key="1">
    <source>
        <dbReference type="HAMAP-Rule" id="MF_00059"/>
    </source>
</evidence>
<comment type="function">
    <text>DNA-dependent RNA polymerase catalyzes the transcription of DNA into RNA using the four ribonucleoside triphosphates as substrates.</text>
</comment>
<comment type="catalytic activity">
    <reaction evidence="1">
        <text>RNA(n) + a ribonucleoside 5'-triphosphate = RNA(n+1) + diphosphate</text>
        <dbReference type="Rhea" id="RHEA:21248"/>
        <dbReference type="Rhea" id="RHEA-COMP:14527"/>
        <dbReference type="Rhea" id="RHEA-COMP:17342"/>
        <dbReference type="ChEBI" id="CHEBI:33019"/>
        <dbReference type="ChEBI" id="CHEBI:61557"/>
        <dbReference type="ChEBI" id="CHEBI:140395"/>
        <dbReference type="EC" id="2.7.7.6"/>
    </reaction>
</comment>
<comment type="subunit">
    <text evidence="1">Homodimer. The RNAP catalytic core consists of 2 alpha, 1 beta, 1 beta' and 1 omega subunit. When a sigma factor is associated with the core the holoenzyme is formed, which can initiate transcription.</text>
</comment>
<comment type="domain">
    <text evidence="1">The N-terminal domain is essential for RNAP assembly and basal transcription, whereas the C-terminal domain is involved in interaction with transcriptional regulators and with upstream promoter elements.</text>
</comment>
<comment type="similarity">
    <text evidence="1">Belongs to the RNA polymerase alpha chain family.</text>
</comment>
<protein>
    <recommendedName>
        <fullName evidence="1">DNA-directed RNA polymerase subunit alpha</fullName>
        <shortName evidence="1">RNAP subunit alpha</shortName>
        <ecNumber evidence="1">2.7.7.6</ecNumber>
    </recommendedName>
    <alternativeName>
        <fullName evidence="1">RNA polymerase subunit alpha</fullName>
    </alternativeName>
    <alternativeName>
        <fullName evidence="1">Transcriptase subunit alpha</fullName>
    </alternativeName>
</protein>
<reference key="1">
    <citation type="journal article" date="2000" name="FEMS Microbiol. Lett.">
        <title>Isolation and piezoresponse of the rpoA gene encoding the RNA polymerase alpha subunit from the deep-sea piezophilic bacterium Shewanella violacea.</title>
        <authorList>
            <person name="Nakasone K."/>
            <person name="Ikegami A."/>
            <person name="Fujii S."/>
            <person name="Kato C."/>
            <person name="Horikoshi K."/>
        </authorList>
    </citation>
    <scope>NUCLEOTIDE SEQUENCE [GENOMIC DNA]</scope>
</reference>
<reference key="2">
    <citation type="journal article" date="2010" name="Mol. Biosyst.">
        <title>Complete genome sequence and comparative analysis of Shewanella violacea, a psychrophilic and piezophilic bacterium from deep sea floor sediments.</title>
        <authorList>
            <person name="Aono E."/>
            <person name="Baba T."/>
            <person name="Ara T."/>
            <person name="Nishi T."/>
            <person name="Nakamichi T."/>
            <person name="Inamoto E."/>
            <person name="Toyonaga H."/>
            <person name="Hasegawa M."/>
            <person name="Takai Y."/>
            <person name="Okumura Y."/>
            <person name="Baba M."/>
            <person name="Tomita M."/>
            <person name="Kato C."/>
            <person name="Oshima T."/>
            <person name="Nakasone K."/>
            <person name="Mori H."/>
        </authorList>
    </citation>
    <scope>NUCLEOTIDE SEQUENCE [LARGE SCALE GENOMIC DNA]</scope>
    <source>
        <strain>JCM 10179 / CIP 106290 / LMG 19151 / DSS12</strain>
    </source>
</reference>
<feature type="chain" id="PRO_0000175376" description="DNA-directed RNA polymerase subunit alpha">
    <location>
        <begin position="1"/>
        <end position="329"/>
    </location>
</feature>
<feature type="region of interest" description="Alpha N-terminal domain (alpha-NTD)" evidence="1">
    <location>
        <begin position="1"/>
        <end position="234"/>
    </location>
</feature>
<feature type="region of interest" description="Alpha C-terminal domain (alpha-CTD)" evidence="1">
    <location>
        <begin position="248"/>
        <end position="329"/>
    </location>
</feature>